<evidence type="ECO:0000255" key="1">
    <source>
        <dbReference type="HAMAP-Rule" id="MF_00300"/>
    </source>
</evidence>
<keyword id="KW-0028">Amino-acid biosynthesis</keyword>
<keyword id="KW-0057">Aromatic amino acid biosynthesis</keyword>
<keyword id="KW-0274">FAD</keyword>
<keyword id="KW-0285">Flavoprotein</keyword>
<keyword id="KW-0288">FMN</keyword>
<keyword id="KW-0456">Lyase</keyword>
<keyword id="KW-0521">NADP</keyword>
<keyword id="KW-1185">Reference proteome</keyword>
<protein>
    <recommendedName>
        <fullName evidence="1">Chorismate synthase</fullName>
        <shortName evidence="1">CS</shortName>
        <ecNumber evidence="1">4.2.3.5</ecNumber>
    </recommendedName>
    <alternativeName>
        <fullName evidence="1">5-enolpyruvylshikimate-3-phosphate phospholyase</fullName>
    </alternativeName>
</protein>
<reference key="1">
    <citation type="journal article" date="2003" name="J. Bacteriol.">
        <title>Complete genome sequence of the oral pathogenic bacterium Porphyromonas gingivalis strain W83.</title>
        <authorList>
            <person name="Nelson K.E."/>
            <person name="Fleischmann R.D."/>
            <person name="DeBoy R.T."/>
            <person name="Paulsen I.T."/>
            <person name="Fouts D.E."/>
            <person name="Eisen J.A."/>
            <person name="Daugherty S.C."/>
            <person name="Dodson R.J."/>
            <person name="Durkin A.S."/>
            <person name="Gwinn M.L."/>
            <person name="Haft D.H."/>
            <person name="Kolonay J.F."/>
            <person name="Nelson W.C."/>
            <person name="Mason T.M."/>
            <person name="Tallon L."/>
            <person name="Gray J."/>
            <person name="Granger D."/>
            <person name="Tettelin H."/>
            <person name="Dong H."/>
            <person name="Galvin J.L."/>
            <person name="Duncan M.J."/>
            <person name="Dewhirst F.E."/>
            <person name="Fraser C.M."/>
        </authorList>
    </citation>
    <scope>NUCLEOTIDE SEQUENCE [LARGE SCALE GENOMIC DNA]</scope>
    <source>
        <strain>ATCC BAA-308 / W83</strain>
    </source>
</reference>
<dbReference type="EC" id="4.2.3.5" evidence="1"/>
<dbReference type="EMBL" id="AE015924">
    <property type="protein sequence ID" value="AAQ66386.1"/>
    <property type="molecule type" value="Genomic_DNA"/>
</dbReference>
<dbReference type="RefSeq" id="WP_005873408.1">
    <property type="nucleotide sequence ID" value="NC_002950.2"/>
</dbReference>
<dbReference type="SMR" id="Q7MV04"/>
<dbReference type="STRING" id="242619.PG_1314"/>
<dbReference type="EnsemblBacteria" id="AAQ66386">
    <property type="protein sequence ID" value="AAQ66386"/>
    <property type="gene ID" value="PG_1314"/>
</dbReference>
<dbReference type="KEGG" id="pgi:PG_1314"/>
<dbReference type="PATRIC" id="fig|242619.8.peg.1215"/>
<dbReference type="eggNOG" id="COG0082">
    <property type="taxonomic scope" value="Bacteria"/>
</dbReference>
<dbReference type="HOGENOM" id="CLU_034547_0_0_10"/>
<dbReference type="BioCyc" id="PGIN242619:G1G02-1219-MONOMER"/>
<dbReference type="UniPathway" id="UPA00053">
    <property type="reaction ID" value="UER00090"/>
</dbReference>
<dbReference type="Proteomes" id="UP000000588">
    <property type="component" value="Chromosome"/>
</dbReference>
<dbReference type="GO" id="GO:0005829">
    <property type="term" value="C:cytosol"/>
    <property type="evidence" value="ECO:0007669"/>
    <property type="project" value="TreeGrafter"/>
</dbReference>
<dbReference type="GO" id="GO:0004107">
    <property type="term" value="F:chorismate synthase activity"/>
    <property type="evidence" value="ECO:0007669"/>
    <property type="project" value="UniProtKB-UniRule"/>
</dbReference>
<dbReference type="GO" id="GO:0010181">
    <property type="term" value="F:FMN binding"/>
    <property type="evidence" value="ECO:0007669"/>
    <property type="project" value="TreeGrafter"/>
</dbReference>
<dbReference type="GO" id="GO:0008652">
    <property type="term" value="P:amino acid biosynthetic process"/>
    <property type="evidence" value="ECO:0007669"/>
    <property type="project" value="UniProtKB-KW"/>
</dbReference>
<dbReference type="GO" id="GO:0009073">
    <property type="term" value="P:aromatic amino acid family biosynthetic process"/>
    <property type="evidence" value="ECO:0007669"/>
    <property type="project" value="UniProtKB-KW"/>
</dbReference>
<dbReference type="GO" id="GO:0009423">
    <property type="term" value="P:chorismate biosynthetic process"/>
    <property type="evidence" value="ECO:0007669"/>
    <property type="project" value="UniProtKB-UniRule"/>
</dbReference>
<dbReference type="CDD" id="cd07304">
    <property type="entry name" value="Chorismate_synthase"/>
    <property type="match status" value="1"/>
</dbReference>
<dbReference type="FunFam" id="3.60.150.10:FF:000002">
    <property type="entry name" value="Chorismate synthase"/>
    <property type="match status" value="1"/>
</dbReference>
<dbReference type="Gene3D" id="3.60.150.10">
    <property type="entry name" value="Chorismate synthase AroC"/>
    <property type="match status" value="1"/>
</dbReference>
<dbReference type="HAMAP" id="MF_00300">
    <property type="entry name" value="Chorismate_synth"/>
    <property type="match status" value="1"/>
</dbReference>
<dbReference type="InterPro" id="IPR000453">
    <property type="entry name" value="Chorismate_synth"/>
</dbReference>
<dbReference type="InterPro" id="IPR035904">
    <property type="entry name" value="Chorismate_synth_AroC_sf"/>
</dbReference>
<dbReference type="InterPro" id="IPR020541">
    <property type="entry name" value="Chorismate_synthase_CS"/>
</dbReference>
<dbReference type="NCBIfam" id="TIGR00033">
    <property type="entry name" value="aroC"/>
    <property type="match status" value="1"/>
</dbReference>
<dbReference type="NCBIfam" id="NF003793">
    <property type="entry name" value="PRK05382.1"/>
    <property type="match status" value="1"/>
</dbReference>
<dbReference type="PANTHER" id="PTHR21085">
    <property type="entry name" value="CHORISMATE SYNTHASE"/>
    <property type="match status" value="1"/>
</dbReference>
<dbReference type="PANTHER" id="PTHR21085:SF0">
    <property type="entry name" value="CHORISMATE SYNTHASE"/>
    <property type="match status" value="1"/>
</dbReference>
<dbReference type="Pfam" id="PF01264">
    <property type="entry name" value="Chorismate_synt"/>
    <property type="match status" value="1"/>
</dbReference>
<dbReference type="PIRSF" id="PIRSF001456">
    <property type="entry name" value="Chorismate_synth"/>
    <property type="match status" value="1"/>
</dbReference>
<dbReference type="SUPFAM" id="SSF103263">
    <property type="entry name" value="Chorismate synthase, AroC"/>
    <property type="match status" value="1"/>
</dbReference>
<dbReference type="PROSITE" id="PS00787">
    <property type="entry name" value="CHORISMATE_SYNTHASE_1"/>
    <property type="match status" value="1"/>
</dbReference>
<dbReference type="PROSITE" id="PS00788">
    <property type="entry name" value="CHORISMATE_SYNTHASE_2"/>
    <property type="match status" value="1"/>
</dbReference>
<dbReference type="PROSITE" id="PS00789">
    <property type="entry name" value="CHORISMATE_SYNTHASE_3"/>
    <property type="match status" value="1"/>
</dbReference>
<proteinExistence type="inferred from homology"/>
<sequence>MNTIGKLFRLTTFGESHGKAIGGVIDGCPAGLFVDMETIERELLRRRPGQSHYTSPRQESDMVQFISGLFRGETTGAPIAFMIDNKDVRSADYDSLSSIFRPGHADYTYFHKYGIRDTRGGGRSSARETAVRVVAGAVAKQLLAPLGIRCTAYTSQIGPVCIPQENAKEYSPEEVESSPIRCPDPNASGLMEAVIETAKKESDSVGGIVDCQISDVPVGWGEPLYGKLHAALGAAMLSINAAKGFEVGDGFALASMRGSEANDQMVAAEDGGISFLSNHSGGISGGISTGQDIRFRVAFKPTPTIGQKQQTVNEQGESISLSAVGRHDPCVVPRAVPVVEAMTWLTLADAYLASRSGRCAHSSLKCNG</sequence>
<accession>Q7MV04</accession>
<comment type="function">
    <text evidence="1">Catalyzes the anti-1,4-elimination of the C-3 phosphate and the C-6 proR hydrogen from 5-enolpyruvylshikimate-3-phosphate (EPSP) to yield chorismate, which is the branch point compound that serves as the starting substrate for the three terminal pathways of aromatic amino acid biosynthesis. This reaction introduces a second double bond into the aromatic ring system.</text>
</comment>
<comment type="catalytic activity">
    <reaction evidence="1">
        <text>5-O-(1-carboxyvinyl)-3-phosphoshikimate = chorismate + phosphate</text>
        <dbReference type="Rhea" id="RHEA:21020"/>
        <dbReference type="ChEBI" id="CHEBI:29748"/>
        <dbReference type="ChEBI" id="CHEBI:43474"/>
        <dbReference type="ChEBI" id="CHEBI:57701"/>
        <dbReference type="EC" id="4.2.3.5"/>
    </reaction>
</comment>
<comment type="cofactor">
    <cofactor evidence="1">
        <name>FMNH2</name>
        <dbReference type="ChEBI" id="CHEBI:57618"/>
    </cofactor>
    <text evidence="1">Reduced FMN (FMNH(2)).</text>
</comment>
<comment type="pathway">
    <text evidence="1">Metabolic intermediate biosynthesis; chorismate biosynthesis; chorismate from D-erythrose 4-phosphate and phosphoenolpyruvate: step 7/7.</text>
</comment>
<comment type="subunit">
    <text evidence="1">Homotetramer.</text>
</comment>
<comment type="similarity">
    <text evidence="1">Belongs to the chorismate synthase family.</text>
</comment>
<organism>
    <name type="scientific">Porphyromonas gingivalis (strain ATCC BAA-308 / W83)</name>
    <dbReference type="NCBI Taxonomy" id="242619"/>
    <lineage>
        <taxon>Bacteria</taxon>
        <taxon>Pseudomonadati</taxon>
        <taxon>Bacteroidota</taxon>
        <taxon>Bacteroidia</taxon>
        <taxon>Bacteroidales</taxon>
        <taxon>Porphyromonadaceae</taxon>
        <taxon>Porphyromonas</taxon>
    </lineage>
</organism>
<name>AROC_PORGI</name>
<feature type="chain" id="PRO_0000140626" description="Chorismate synthase">
    <location>
        <begin position="1"/>
        <end position="368"/>
    </location>
</feature>
<feature type="binding site" evidence="1">
    <location>
        <position position="46"/>
    </location>
    <ligand>
        <name>NADP(+)</name>
        <dbReference type="ChEBI" id="CHEBI:58349"/>
    </ligand>
</feature>
<feature type="binding site" evidence="1">
    <location>
        <begin position="123"/>
        <end position="125"/>
    </location>
    <ligand>
        <name>FMN</name>
        <dbReference type="ChEBI" id="CHEBI:58210"/>
    </ligand>
</feature>
<feature type="binding site" evidence="1">
    <location>
        <begin position="240"/>
        <end position="241"/>
    </location>
    <ligand>
        <name>FMN</name>
        <dbReference type="ChEBI" id="CHEBI:58210"/>
    </ligand>
</feature>
<feature type="binding site" evidence="1">
    <location>
        <position position="285"/>
    </location>
    <ligand>
        <name>FMN</name>
        <dbReference type="ChEBI" id="CHEBI:58210"/>
    </ligand>
</feature>
<feature type="binding site" evidence="1">
    <location>
        <begin position="300"/>
        <end position="304"/>
    </location>
    <ligand>
        <name>FMN</name>
        <dbReference type="ChEBI" id="CHEBI:58210"/>
    </ligand>
</feature>
<feature type="binding site" evidence="1">
    <location>
        <position position="326"/>
    </location>
    <ligand>
        <name>FMN</name>
        <dbReference type="ChEBI" id="CHEBI:58210"/>
    </ligand>
</feature>
<gene>
    <name evidence="1" type="primary">aroC</name>
    <name type="ordered locus">PG_1314</name>
</gene>